<name>SYT_DINSH</name>
<comment type="function">
    <text evidence="1">Catalyzes the attachment of threonine to tRNA(Thr) in a two-step reaction: L-threonine is first activated by ATP to form Thr-AMP and then transferred to the acceptor end of tRNA(Thr). Also edits incorrectly charged L-seryl-tRNA(Thr).</text>
</comment>
<comment type="catalytic activity">
    <reaction evidence="1">
        <text>tRNA(Thr) + L-threonine + ATP = L-threonyl-tRNA(Thr) + AMP + diphosphate + H(+)</text>
        <dbReference type="Rhea" id="RHEA:24624"/>
        <dbReference type="Rhea" id="RHEA-COMP:9670"/>
        <dbReference type="Rhea" id="RHEA-COMP:9704"/>
        <dbReference type="ChEBI" id="CHEBI:15378"/>
        <dbReference type="ChEBI" id="CHEBI:30616"/>
        <dbReference type="ChEBI" id="CHEBI:33019"/>
        <dbReference type="ChEBI" id="CHEBI:57926"/>
        <dbReference type="ChEBI" id="CHEBI:78442"/>
        <dbReference type="ChEBI" id="CHEBI:78534"/>
        <dbReference type="ChEBI" id="CHEBI:456215"/>
        <dbReference type="EC" id="6.1.1.3"/>
    </reaction>
</comment>
<comment type="cofactor">
    <cofactor evidence="1">
        <name>Zn(2+)</name>
        <dbReference type="ChEBI" id="CHEBI:29105"/>
    </cofactor>
    <text evidence="1">Binds 1 zinc ion per subunit.</text>
</comment>
<comment type="subunit">
    <text evidence="1">Homodimer.</text>
</comment>
<comment type="subcellular location">
    <subcellularLocation>
        <location evidence="1">Cytoplasm</location>
    </subcellularLocation>
</comment>
<comment type="similarity">
    <text evidence="1">Belongs to the class-II aminoacyl-tRNA synthetase family.</text>
</comment>
<evidence type="ECO:0000255" key="1">
    <source>
        <dbReference type="HAMAP-Rule" id="MF_00184"/>
    </source>
</evidence>
<evidence type="ECO:0000255" key="2">
    <source>
        <dbReference type="PROSITE-ProRule" id="PRU01228"/>
    </source>
</evidence>
<reference key="1">
    <citation type="journal article" date="2010" name="ISME J.">
        <title>The complete genome sequence of the algal symbiont Dinoroseobacter shibae: a hitchhiker's guide to life in the sea.</title>
        <authorList>
            <person name="Wagner-Dobler I."/>
            <person name="Ballhausen B."/>
            <person name="Berger M."/>
            <person name="Brinkhoff T."/>
            <person name="Buchholz I."/>
            <person name="Bunk B."/>
            <person name="Cypionka H."/>
            <person name="Daniel R."/>
            <person name="Drepper T."/>
            <person name="Gerdts G."/>
            <person name="Hahnke S."/>
            <person name="Han C."/>
            <person name="Jahn D."/>
            <person name="Kalhoefer D."/>
            <person name="Kiss H."/>
            <person name="Klenk H.P."/>
            <person name="Kyrpides N."/>
            <person name="Liebl W."/>
            <person name="Liesegang H."/>
            <person name="Meincke L."/>
            <person name="Pati A."/>
            <person name="Petersen J."/>
            <person name="Piekarski T."/>
            <person name="Pommerenke C."/>
            <person name="Pradella S."/>
            <person name="Pukall R."/>
            <person name="Rabus R."/>
            <person name="Stackebrandt E."/>
            <person name="Thole S."/>
            <person name="Thompson L."/>
            <person name="Tielen P."/>
            <person name="Tomasch J."/>
            <person name="von Jan M."/>
            <person name="Wanphrut N."/>
            <person name="Wichels A."/>
            <person name="Zech H."/>
            <person name="Simon M."/>
        </authorList>
    </citation>
    <scope>NUCLEOTIDE SEQUENCE [LARGE SCALE GENOMIC DNA]</scope>
    <source>
        <strain>DSM 16493 / NCIMB 14021 / DFL 12</strain>
    </source>
</reference>
<keyword id="KW-0030">Aminoacyl-tRNA synthetase</keyword>
<keyword id="KW-0067">ATP-binding</keyword>
<keyword id="KW-0963">Cytoplasm</keyword>
<keyword id="KW-0436">Ligase</keyword>
<keyword id="KW-0479">Metal-binding</keyword>
<keyword id="KW-0547">Nucleotide-binding</keyword>
<keyword id="KW-0648">Protein biosynthesis</keyword>
<keyword id="KW-1185">Reference proteome</keyword>
<keyword id="KW-0694">RNA-binding</keyword>
<keyword id="KW-0820">tRNA-binding</keyword>
<keyword id="KW-0862">Zinc</keyword>
<proteinExistence type="inferred from homology"/>
<dbReference type="EC" id="6.1.1.3" evidence="1"/>
<dbReference type="EMBL" id="CP000830">
    <property type="protein sequence ID" value="ABV92522.1"/>
    <property type="molecule type" value="Genomic_DNA"/>
</dbReference>
<dbReference type="RefSeq" id="WP_012177454.1">
    <property type="nucleotide sequence ID" value="NC_009952.1"/>
</dbReference>
<dbReference type="SMR" id="A8LQX9"/>
<dbReference type="STRING" id="398580.Dshi_0777"/>
<dbReference type="KEGG" id="dsh:Dshi_0777"/>
<dbReference type="eggNOG" id="COG0441">
    <property type="taxonomic scope" value="Bacteria"/>
</dbReference>
<dbReference type="HOGENOM" id="CLU_008554_0_1_5"/>
<dbReference type="OrthoDB" id="9802304at2"/>
<dbReference type="Proteomes" id="UP000006833">
    <property type="component" value="Chromosome"/>
</dbReference>
<dbReference type="GO" id="GO:0005737">
    <property type="term" value="C:cytoplasm"/>
    <property type="evidence" value="ECO:0007669"/>
    <property type="project" value="UniProtKB-SubCell"/>
</dbReference>
<dbReference type="GO" id="GO:0005524">
    <property type="term" value="F:ATP binding"/>
    <property type="evidence" value="ECO:0007669"/>
    <property type="project" value="UniProtKB-UniRule"/>
</dbReference>
<dbReference type="GO" id="GO:0046872">
    <property type="term" value="F:metal ion binding"/>
    <property type="evidence" value="ECO:0007669"/>
    <property type="project" value="UniProtKB-KW"/>
</dbReference>
<dbReference type="GO" id="GO:0004829">
    <property type="term" value="F:threonine-tRNA ligase activity"/>
    <property type="evidence" value="ECO:0007669"/>
    <property type="project" value="UniProtKB-UniRule"/>
</dbReference>
<dbReference type="GO" id="GO:0000049">
    <property type="term" value="F:tRNA binding"/>
    <property type="evidence" value="ECO:0007669"/>
    <property type="project" value="UniProtKB-KW"/>
</dbReference>
<dbReference type="GO" id="GO:0006435">
    <property type="term" value="P:threonyl-tRNA aminoacylation"/>
    <property type="evidence" value="ECO:0007669"/>
    <property type="project" value="UniProtKB-UniRule"/>
</dbReference>
<dbReference type="CDD" id="cd01667">
    <property type="entry name" value="TGS_ThrRS"/>
    <property type="match status" value="1"/>
</dbReference>
<dbReference type="CDD" id="cd00860">
    <property type="entry name" value="ThrRS_anticodon"/>
    <property type="match status" value="1"/>
</dbReference>
<dbReference type="CDD" id="cd00771">
    <property type="entry name" value="ThrRS_core"/>
    <property type="match status" value="1"/>
</dbReference>
<dbReference type="FunFam" id="3.10.20.30:FF:000005">
    <property type="entry name" value="Threonine--tRNA ligase"/>
    <property type="match status" value="1"/>
</dbReference>
<dbReference type="FunFam" id="3.30.930.10:FF:000002">
    <property type="entry name" value="Threonine--tRNA ligase"/>
    <property type="match status" value="1"/>
</dbReference>
<dbReference type="FunFam" id="3.30.980.10:FF:000001">
    <property type="entry name" value="Threonine--tRNA ligase"/>
    <property type="match status" value="1"/>
</dbReference>
<dbReference type="FunFam" id="3.40.50.800:FF:000001">
    <property type="entry name" value="Threonine--tRNA ligase"/>
    <property type="match status" value="1"/>
</dbReference>
<dbReference type="Gene3D" id="3.10.20.30">
    <property type="match status" value="1"/>
</dbReference>
<dbReference type="Gene3D" id="3.30.54.20">
    <property type="match status" value="1"/>
</dbReference>
<dbReference type="Gene3D" id="3.40.50.800">
    <property type="entry name" value="Anticodon-binding domain"/>
    <property type="match status" value="1"/>
</dbReference>
<dbReference type="Gene3D" id="3.30.930.10">
    <property type="entry name" value="Bira Bifunctional Protein, Domain 2"/>
    <property type="match status" value="1"/>
</dbReference>
<dbReference type="Gene3D" id="3.30.980.10">
    <property type="entry name" value="Threonyl-trna Synthetase, Chain A, domain 2"/>
    <property type="match status" value="1"/>
</dbReference>
<dbReference type="HAMAP" id="MF_00184">
    <property type="entry name" value="Thr_tRNA_synth"/>
    <property type="match status" value="1"/>
</dbReference>
<dbReference type="InterPro" id="IPR002314">
    <property type="entry name" value="aa-tRNA-synt_IIb"/>
</dbReference>
<dbReference type="InterPro" id="IPR006195">
    <property type="entry name" value="aa-tRNA-synth_II"/>
</dbReference>
<dbReference type="InterPro" id="IPR045864">
    <property type="entry name" value="aa-tRNA-synth_II/BPL/LPL"/>
</dbReference>
<dbReference type="InterPro" id="IPR004154">
    <property type="entry name" value="Anticodon-bd"/>
</dbReference>
<dbReference type="InterPro" id="IPR036621">
    <property type="entry name" value="Anticodon-bd_dom_sf"/>
</dbReference>
<dbReference type="InterPro" id="IPR012675">
    <property type="entry name" value="Beta-grasp_dom_sf"/>
</dbReference>
<dbReference type="InterPro" id="IPR004095">
    <property type="entry name" value="TGS"/>
</dbReference>
<dbReference type="InterPro" id="IPR012676">
    <property type="entry name" value="TGS-like"/>
</dbReference>
<dbReference type="InterPro" id="IPR002320">
    <property type="entry name" value="Thr-tRNA-ligase_IIa"/>
</dbReference>
<dbReference type="InterPro" id="IPR018163">
    <property type="entry name" value="Thr/Ala-tRNA-synth_IIc_edit"/>
</dbReference>
<dbReference type="InterPro" id="IPR047246">
    <property type="entry name" value="ThrRS_anticodon"/>
</dbReference>
<dbReference type="InterPro" id="IPR033728">
    <property type="entry name" value="ThrRS_core"/>
</dbReference>
<dbReference type="InterPro" id="IPR012947">
    <property type="entry name" value="tRNA_SAD"/>
</dbReference>
<dbReference type="NCBIfam" id="TIGR00418">
    <property type="entry name" value="thrS"/>
    <property type="match status" value="1"/>
</dbReference>
<dbReference type="PANTHER" id="PTHR11451:SF44">
    <property type="entry name" value="THREONINE--TRNA LIGASE, CHLOROPLASTIC_MITOCHONDRIAL 2"/>
    <property type="match status" value="1"/>
</dbReference>
<dbReference type="PANTHER" id="PTHR11451">
    <property type="entry name" value="THREONINE-TRNA LIGASE"/>
    <property type="match status" value="1"/>
</dbReference>
<dbReference type="Pfam" id="PF03129">
    <property type="entry name" value="HGTP_anticodon"/>
    <property type="match status" value="1"/>
</dbReference>
<dbReference type="Pfam" id="PF02824">
    <property type="entry name" value="TGS"/>
    <property type="match status" value="1"/>
</dbReference>
<dbReference type="Pfam" id="PF00587">
    <property type="entry name" value="tRNA-synt_2b"/>
    <property type="match status" value="1"/>
</dbReference>
<dbReference type="Pfam" id="PF07973">
    <property type="entry name" value="tRNA_SAD"/>
    <property type="match status" value="1"/>
</dbReference>
<dbReference type="PRINTS" id="PR01047">
    <property type="entry name" value="TRNASYNTHTHR"/>
</dbReference>
<dbReference type="SMART" id="SM00863">
    <property type="entry name" value="tRNA_SAD"/>
    <property type="match status" value="1"/>
</dbReference>
<dbReference type="SUPFAM" id="SSF52954">
    <property type="entry name" value="Class II aaRS ABD-related"/>
    <property type="match status" value="1"/>
</dbReference>
<dbReference type="SUPFAM" id="SSF55681">
    <property type="entry name" value="Class II aaRS and biotin synthetases"/>
    <property type="match status" value="1"/>
</dbReference>
<dbReference type="SUPFAM" id="SSF81271">
    <property type="entry name" value="TGS-like"/>
    <property type="match status" value="1"/>
</dbReference>
<dbReference type="SUPFAM" id="SSF55186">
    <property type="entry name" value="ThrRS/AlaRS common domain"/>
    <property type="match status" value="1"/>
</dbReference>
<dbReference type="PROSITE" id="PS50862">
    <property type="entry name" value="AA_TRNA_LIGASE_II"/>
    <property type="match status" value="1"/>
</dbReference>
<dbReference type="PROSITE" id="PS51880">
    <property type="entry name" value="TGS"/>
    <property type="match status" value="1"/>
</dbReference>
<protein>
    <recommendedName>
        <fullName evidence="1">Threonine--tRNA ligase</fullName>
        <ecNumber evidence="1">6.1.1.3</ecNumber>
    </recommendedName>
    <alternativeName>
        <fullName evidence="1">Threonyl-tRNA synthetase</fullName>
        <shortName evidence="1">ThrRS</shortName>
    </alternativeName>
</protein>
<sequence>MAQISLTFPDGNARDFDAGVTPAEVAASISTSLGKKAISATVNGAHHDLQWPIDADASIAIHTLKDDAQALELIRHDCAHIMARAVQEIWPDVKVTIGPVIENGFYYDFDRAEPFTPEDLGAIEAKMKEIINARDPVRTEVWDRPRAIAHYEANGEPYKVELIEAIPGNEPLRMYWHGDWQDLCRGPHLQHTGQVPADSFKLMSVAGAYWRGDSSRPMLQRIYGVAFQNRDALKKHLHMLEEAAKRDHRKLGREMNLFHMQEEAPGQVFWHPNGWTVYTTLQDYMRRRQRENGYVEVNTPQVVDRKLWEASGHWDKYQENMFIVEVDEEHAREKAINALKPMNCPCHVQVYNQGLKSYRDLPLRMAEFGACNRYEPSGALHGLMRVRGFTQDDAHIFCTEDQIQDETARFIRMLSTIYRDLGFESFDIKFSTRPEVRAGSDAVWDKAEAALEAAIRTVTDDFELDPGEGAFYGPKLDFKLTDAIGREWQLGTFQADFVLPERLDATYIGEDGAKHRPVMLHRAILGSFERFLGILIENFAGKLPFWLAPRQVVVASIISEADDYVREVVAALTRAGIRAEADIRNEKINYKVREHSVGKVPVILAVGRREMEERTVTLRRLGEKQTSVVGLDALVADLAAEATPPDQRPDQPAV</sequence>
<gene>
    <name evidence="1" type="primary">thrS</name>
    <name type="ordered locus">Dshi_0777</name>
</gene>
<feature type="chain" id="PRO_1000077356" description="Threonine--tRNA ligase">
    <location>
        <begin position="1"/>
        <end position="654"/>
    </location>
</feature>
<feature type="domain" description="TGS" evidence="2">
    <location>
        <begin position="1"/>
        <end position="63"/>
    </location>
</feature>
<feature type="region of interest" description="Catalytic" evidence="1">
    <location>
        <begin position="247"/>
        <end position="544"/>
    </location>
</feature>
<feature type="binding site" evidence="1">
    <location>
        <position position="344"/>
    </location>
    <ligand>
        <name>Zn(2+)</name>
        <dbReference type="ChEBI" id="CHEBI:29105"/>
    </ligand>
</feature>
<feature type="binding site" evidence="1">
    <location>
        <position position="395"/>
    </location>
    <ligand>
        <name>Zn(2+)</name>
        <dbReference type="ChEBI" id="CHEBI:29105"/>
    </ligand>
</feature>
<feature type="binding site" evidence="1">
    <location>
        <position position="521"/>
    </location>
    <ligand>
        <name>Zn(2+)</name>
        <dbReference type="ChEBI" id="CHEBI:29105"/>
    </ligand>
</feature>
<accession>A8LQX9</accession>
<organism>
    <name type="scientific">Dinoroseobacter shibae (strain DSM 16493 / NCIMB 14021 / DFL 12)</name>
    <dbReference type="NCBI Taxonomy" id="398580"/>
    <lineage>
        <taxon>Bacteria</taxon>
        <taxon>Pseudomonadati</taxon>
        <taxon>Pseudomonadota</taxon>
        <taxon>Alphaproteobacteria</taxon>
        <taxon>Rhodobacterales</taxon>
        <taxon>Roseobacteraceae</taxon>
        <taxon>Dinoroseobacter</taxon>
    </lineage>
</organism>